<feature type="chain" id="PRO_0000287616" description="Protein FAM133B">
    <location>
        <begin position="1"/>
        <end position="247"/>
    </location>
</feature>
<feature type="region of interest" description="Disordered" evidence="1">
    <location>
        <begin position="19"/>
        <end position="38"/>
    </location>
</feature>
<feature type="region of interest" description="Disordered" evidence="1">
    <location>
        <begin position="70"/>
        <end position="247"/>
    </location>
</feature>
<feature type="compositionally biased region" description="Basic and acidic residues" evidence="1">
    <location>
        <begin position="70"/>
        <end position="80"/>
    </location>
</feature>
<feature type="compositionally biased region" description="Basic residues" evidence="1">
    <location>
        <begin position="89"/>
        <end position="102"/>
    </location>
</feature>
<feature type="compositionally biased region" description="Low complexity" evidence="1">
    <location>
        <begin position="103"/>
        <end position="119"/>
    </location>
</feature>
<feature type="compositionally biased region" description="Basic residues" evidence="1">
    <location>
        <begin position="128"/>
        <end position="140"/>
    </location>
</feature>
<feature type="compositionally biased region" description="Basic and acidic residues" evidence="1">
    <location>
        <begin position="165"/>
        <end position="176"/>
    </location>
</feature>
<feature type="compositionally biased region" description="Basic and acidic residues" evidence="1">
    <location>
        <begin position="211"/>
        <end position="221"/>
    </location>
</feature>
<feature type="compositionally biased region" description="Basic residues" evidence="1">
    <location>
        <begin position="222"/>
        <end position="239"/>
    </location>
</feature>
<feature type="modified residue" description="Phosphoserine" evidence="8 9">
    <location>
        <position position="82"/>
    </location>
</feature>
<feature type="modified residue" description="Phosphoserine" evidence="6">
    <location>
        <position position="191"/>
    </location>
</feature>
<feature type="modified residue" description="Phosphoserine" evidence="6">
    <location>
        <position position="192"/>
    </location>
</feature>
<feature type="modified residue" description="Phosphoserine" evidence="6">
    <location>
        <position position="194"/>
    </location>
</feature>
<feature type="modified residue" description="Phosphoserine" evidence="7">
    <location>
        <position position="196"/>
    </location>
</feature>
<feature type="splice variant" id="VSP_025571" description="In isoform 2." evidence="2 3 4">
    <location>
        <begin position="1"/>
        <end position="10"/>
    </location>
</feature>
<name>F133B_HUMAN</name>
<keyword id="KW-0025">Alternative splicing</keyword>
<keyword id="KW-0597">Phosphoprotein</keyword>
<keyword id="KW-1267">Proteomics identification</keyword>
<keyword id="KW-1185">Reference proteome</keyword>
<gene>
    <name type="primary">FAM133B</name>
</gene>
<evidence type="ECO:0000256" key="1">
    <source>
        <dbReference type="SAM" id="MobiDB-lite"/>
    </source>
</evidence>
<evidence type="ECO:0000303" key="2">
    <source>
    </source>
</evidence>
<evidence type="ECO:0000303" key="3">
    <source>
    </source>
</evidence>
<evidence type="ECO:0000303" key="4">
    <source>
    </source>
</evidence>
<evidence type="ECO:0000305" key="5"/>
<evidence type="ECO:0007744" key="6">
    <source>
    </source>
</evidence>
<evidence type="ECO:0007744" key="7">
    <source>
    </source>
</evidence>
<evidence type="ECO:0007744" key="8">
    <source>
    </source>
</evidence>
<evidence type="ECO:0007744" key="9">
    <source>
    </source>
</evidence>
<dbReference type="EMBL" id="AK313692">
    <property type="protein sequence ID" value="BAG36441.1"/>
    <property type="molecule type" value="mRNA"/>
</dbReference>
<dbReference type="EMBL" id="AL833918">
    <property type="protein sequence ID" value="CAD38774.1"/>
    <property type="molecule type" value="mRNA"/>
</dbReference>
<dbReference type="EMBL" id="CH236949">
    <property type="protein sequence ID" value="EAL24147.1"/>
    <property type="molecule type" value="Genomic_DNA"/>
</dbReference>
<dbReference type="EMBL" id="CH471091">
    <property type="protein sequence ID" value="EAW76831.1"/>
    <property type="molecule type" value="Genomic_DNA"/>
</dbReference>
<dbReference type="EMBL" id="BC017874">
    <property type="protein sequence ID" value="AAH17874.1"/>
    <property type="status" value="ALT_TERM"/>
    <property type="molecule type" value="mRNA"/>
</dbReference>
<dbReference type="EMBL" id="BC032461">
    <property type="protein sequence ID" value="AAH32461.1"/>
    <property type="molecule type" value="mRNA"/>
</dbReference>
<dbReference type="EMBL" id="BC057771">
    <property type="protein sequence ID" value="AAH57771.1"/>
    <property type="molecule type" value="mRNA"/>
</dbReference>
<dbReference type="EMBL" id="BC062706">
    <property type="protein sequence ID" value="AAH62706.1"/>
    <property type="status" value="ALT_TERM"/>
    <property type="molecule type" value="mRNA"/>
</dbReference>
<dbReference type="EMBL" id="BC090868">
    <property type="protein sequence ID" value="AAH90868.1"/>
    <property type="molecule type" value="mRNA"/>
</dbReference>
<dbReference type="CCDS" id="CCDS47640.1">
    <molecule id="Q5BKY9-1"/>
</dbReference>
<dbReference type="CCDS" id="CCDS47641.1">
    <molecule id="Q5BKY9-2"/>
</dbReference>
<dbReference type="RefSeq" id="NP_001035146.1">
    <molecule id="Q5BKY9-2"/>
    <property type="nucleotide sequence ID" value="NM_001040057.3"/>
</dbReference>
<dbReference type="RefSeq" id="NP_001275513.1">
    <molecule id="Q5BKY9-2"/>
    <property type="nucleotide sequence ID" value="NM_001288584.2"/>
</dbReference>
<dbReference type="RefSeq" id="NP_690002.2">
    <molecule id="Q5BKY9-1"/>
    <property type="nucleotide sequence ID" value="NM_152789.4"/>
</dbReference>
<dbReference type="RefSeq" id="XP_011514306.1">
    <property type="nucleotide sequence ID" value="XM_011516004.2"/>
</dbReference>
<dbReference type="SMR" id="Q5BKY9"/>
<dbReference type="BioGRID" id="129218">
    <property type="interactions" value="39"/>
</dbReference>
<dbReference type="FunCoup" id="Q5BKY9">
    <property type="interactions" value="472"/>
</dbReference>
<dbReference type="IntAct" id="Q5BKY9">
    <property type="interactions" value="12"/>
</dbReference>
<dbReference type="STRING" id="9606.ENSP00000398401"/>
<dbReference type="GlyGen" id="Q5BKY9">
    <property type="glycosylation" value="1 site, 1 O-linked glycan (1 site)"/>
</dbReference>
<dbReference type="iPTMnet" id="Q5BKY9"/>
<dbReference type="PhosphoSitePlus" id="Q5BKY9"/>
<dbReference type="BioMuta" id="FAM133B"/>
<dbReference type="DMDM" id="74736047"/>
<dbReference type="jPOST" id="Q5BKY9"/>
<dbReference type="MassIVE" id="Q5BKY9"/>
<dbReference type="PaxDb" id="9606-ENSP00000398401"/>
<dbReference type="PeptideAtlas" id="Q5BKY9"/>
<dbReference type="ProteomicsDB" id="62711">
    <molecule id="Q5BKY9-1"/>
</dbReference>
<dbReference type="ProteomicsDB" id="62712">
    <molecule id="Q5BKY9-2"/>
</dbReference>
<dbReference type="Pumba" id="Q5BKY9"/>
<dbReference type="Antibodypedia" id="58077">
    <property type="antibodies" value="32 antibodies from 11 providers"/>
</dbReference>
<dbReference type="DNASU" id="257415"/>
<dbReference type="Ensembl" id="ENST00000427372.5">
    <molecule id="Q5BKY9-2"/>
    <property type="protein sequence ID" value="ENSP00000402843.1"/>
    <property type="gene ID" value="ENSG00000234545.8"/>
</dbReference>
<dbReference type="Ensembl" id="ENST00000438306.5">
    <molecule id="Q5BKY9-2"/>
    <property type="protein sequence ID" value="ENSP00000389783.1"/>
    <property type="gene ID" value="ENSG00000234545.8"/>
</dbReference>
<dbReference type="Ensembl" id="ENST00000445716.6">
    <molecule id="Q5BKY9-1"/>
    <property type="protein sequence ID" value="ENSP00000398401.1"/>
    <property type="gene ID" value="ENSG00000234545.8"/>
</dbReference>
<dbReference type="GeneID" id="257415"/>
<dbReference type="KEGG" id="hsa:257415"/>
<dbReference type="MANE-Select" id="ENST00000445716.6">
    <property type="protein sequence ID" value="ENSP00000398401.1"/>
    <property type="RefSeq nucleotide sequence ID" value="NM_152789.4"/>
    <property type="RefSeq protein sequence ID" value="NP_690002.2"/>
</dbReference>
<dbReference type="UCSC" id="uc003umb.5">
    <molecule id="Q5BKY9-1"/>
    <property type="organism name" value="human"/>
</dbReference>
<dbReference type="AGR" id="HGNC:28629"/>
<dbReference type="CTD" id="257415"/>
<dbReference type="DisGeNET" id="257415"/>
<dbReference type="GeneCards" id="FAM133B"/>
<dbReference type="HGNC" id="HGNC:28629">
    <property type="gene designation" value="FAM133B"/>
</dbReference>
<dbReference type="HPA" id="ENSG00000234545">
    <property type="expression patterns" value="Low tissue specificity"/>
</dbReference>
<dbReference type="neXtProt" id="NX_Q5BKY9"/>
<dbReference type="OpenTargets" id="ENSG00000234545"/>
<dbReference type="PharmGKB" id="PA162386138"/>
<dbReference type="VEuPathDB" id="HostDB:ENSG00000234545"/>
<dbReference type="eggNOG" id="ENOG502QWN4">
    <property type="taxonomic scope" value="Eukaryota"/>
</dbReference>
<dbReference type="GeneTree" id="ENSGT00730000111097"/>
<dbReference type="HOGENOM" id="CLU_108741_0_0_1"/>
<dbReference type="InParanoid" id="Q5BKY9"/>
<dbReference type="OMA" id="RPTWDDL"/>
<dbReference type="OrthoDB" id="9540243at2759"/>
<dbReference type="PAN-GO" id="Q5BKY9">
    <property type="GO annotations" value="0 GO annotations based on evolutionary models"/>
</dbReference>
<dbReference type="TreeFam" id="TF350193"/>
<dbReference type="PathwayCommons" id="Q5BKY9"/>
<dbReference type="SignaLink" id="Q5BKY9"/>
<dbReference type="BioGRID-ORCS" id="257415">
    <property type="hits" value="325 hits in 1086 CRISPR screens"/>
</dbReference>
<dbReference type="CD-CODE" id="91857CE7">
    <property type="entry name" value="Nucleolus"/>
</dbReference>
<dbReference type="ChiTaRS" id="FAM133B">
    <property type="organism name" value="human"/>
</dbReference>
<dbReference type="GenomeRNAi" id="257415"/>
<dbReference type="Pharos" id="Q5BKY9">
    <property type="development level" value="Tdark"/>
</dbReference>
<dbReference type="PRO" id="PR:Q5BKY9"/>
<dbReference type="Proteomes" id="UP000005640">
    <property type="component" value="Chromosome 7"/>
</dbReference>
<dbReference type="RNAct" id="Q5BKY9">
    <property type="molecule type" value="protein"/>
</dbReference>
<dbReference type="Bgee" id="ENSG00000234545">
    <property type="expression patterns" value="Expressed in calcaneal tendon and 110 other cell types or tissues"/>
</dbReference>
<dbReference type="ExpressionAtlas" id="Q5BKY9">
    <property type="expression patterns" value="baseline and differential"/>
</dbReference>
<dbReference type="GO" id="GO:0003723">
    <property type="term" value="F:RNA binding"/>
    <property type="evidence" value="ECO:0007005"/>
    <property type="project" value="UniProtKB"/>
</dbReference>
<dbReference type="InterPro" id="IPR026766">
    <property type="entry name" value="Fam133"/>
</dbReference>
<dbReference type="PANTHER" id="PTHR31911">
    <property type="entry name" value="PROTEIN FAM133"/>
    <property type="match status" value="1"/>
</dbReference>
<dbReference type="PANTHER" id="PTHR31911:SF3">
    <property type="entry name" value="PROTEIN FAM133B"/>
    <property type="match status" value="1"/>
</dbReference>
<protein>
    <recommendedName>
        <fullName>Protein FAM133B</fullName>
    </recommendedName>
</protein>
<organism>
    <name type="scientific">Homo sapiens</name>
    <name type="common">Human</name>
    <dbReference type="NCBI Taxonomy" id="9606"/>
    <lineage>
        <taxon>Eukaryota</taxon>
        <taxon>Metazoa</taxon>
        <taxon>Chordata</taxon>
        <taxon>Craniata</taxon>
        <taxon>Vertebrata</taxon>
        <taxon>Euteleostomi</taxon>
        <taxon>Mammalia</taxon>
        <taxon>Eutheria</taxon>
        <taxon>Euarchontoglires</taxon>
        <taxon>Primates</taxon>
        <taxon>Haplorrhini</taxon>
        <taxon>Catarrhini</taxon>
        <taxon>Hominidae</taxon>
        <taxon>Homo</taxon>
    </lineage>
</organism>
<accession>Q5BKY9</accession>
<accession>B2R994</accession>
<accession>Q05D67</accession>
<accession>Q6P5S6</accession>
<accession>Q8N0W8</accession>
<reference key="1">
    <citation type="journal article" date="2004" name="Nat. Genet.">
        <title>Complete sequencing and characterization of 21,243 full-length human cDNAs.</title>
        <authorList>
            <person name="Ota T."/>
            <person name="Suzuki Y."/>
            <person name="Nishikawa T."/>
            <person name="Otsuki T."/>
            <person name="Sugiyama T."/>
            <person name="Irie R."/>
            <person name="Wakamatsu A."/>
            <person name="Hayashi K."/>
            <person name="Sato H."/>
            <person name="Nagai K."/>
            <person name="Kimura K."/>
            <person name="Makita H."/>
            <person name="Sekine M."/>
            <person name="Obayashi M."/>
            <person name="Nishi T."/>
            <person name="Shibahara T."/>
            <person name="Tanaka T."/>
            <person name="Ishii S."/>
            <person name="Yamamoto J."/>
            <person name="Saito K."/>
            <person name="Kawai Y."/>
            <person name="Isono Y."/>
            <person name="Nakamura Y."/>
            <person name="Nagahari K."/>
            <person name="Murakami K."/>
            <person name="Yasuda T."/>
            <person name="Iwayanagi T."/>
            <person name="Wagatsuma M."/>
            <person name="Shiratori A."/>
            <person name="Sudo H."/>
            <person name="Hosoiri T."/>
            <person name="Kaku Y."/>
            <person name="Kodaira H."/>
            <person name="Kondo H."/>
            <person name="Sugawara M."/>
            <person name="Takahashi M."/>
            <person name="Kanda K."/>
            <person name="Yokoi T."/>
            <person name="Furuya T."/>
            <person name="Kikkawa E."/>
            <person name="Omura Y."/>
            <person name="Abe K."/>
            <person name="Kamihara K."/>
            <person name="Katsuta N."/>
            <person name="Sato K."/>
            <person name="Tanikawa M."/>
            <person name="Yamazaki M."/>
            <person name="Ninomiya K."/>
            <person name="Ishibashi T."/>
            <person name="Yamashita H."/>
            <person name="Murakawa K."/>
            <person name="Fujimori K."/>
            <person name="Tanai H."/>
            <person name="Kimata M."/>
            <person name="Watanabe M."/>
            <person name="Hiraoka S."/>
            <person name="Chiba Y."/>
            <person name="Ishida S."/>
            <person name="Ono Y."/>
            <person name="Takiguchi S."/>
            <person name="Watanabe S."/>
            <person name="Yosida M."/>
            <person name="Hotuta T."/>
            <person name="Kusano J."/>
            <person name="Kanehori K."/>
            <person name="Takahashi-Fujii A."/>
            <person name="Hara H."/>
            <person name="Tanase T.-O."/>
            <person name="Nomura Y."/>
            <person name="Togiya S."/>
            <person name="Komai F."/>
            <person name="Hara R."/>
            <person name="Takeuchi K."/>
            <person name="Arita M."/>
            <person name="Imose N."/>
            <person name="Musashino K."/>
            <person name="Yuuki H."/>
            <person name="Oshima A."/>
            <person name="Sasaki N."/>
            <person name="Aotsuka S."/>
            <person name="Yoshikawa Y."/>
            <person name="Matsunawa H."/>
            <person name="Ichihara T."/>
            <person name="Shiohata N."/>
            <person name="Sano S."/>
            <person name="Moriya S."/>
            <person name="Momiyama H."/>
            <person name="Satoh N."/>
            <person name="Takami S."/>
            <person name="Terashima Y."/>
            <person name="Suzuki O."/>
            <person name="Nakagawa S."/>
            <person name="Senoh A."/>
            <person name="Mizoguchi H."/>
            <person name="Goto Y."/>
            <person name="Shimizu F."/>
            <person name="Wakebe H."/>
            <person name="Hishigaki H."/>
            <person name="Watanabe T."/>
            <person name="Sugiyama A."/>
            <person name="Takemoto M."/>
            <person name="Kawakami B."/>
            <person name="Yamazaki M."/>
            <person name="Watanabe K."/>
            <person name="Kumagai A."/>
            <person name="Itakura S."/>
            <person name="Fukuzumi Y."/>
            <person name="Fujimori Y."/>
            <person name="Komiyama M."/>
            <person name="Tashiro H."/>
            <person name="Tanigami A."/>
            <person name="Fujiwara T."/>
            <person name="Ono T."/>
            <person name="Yamada K."/>
            <person name="Fujii Y."/>
            <person name="Ozaki K."/>
            <person name="Hirao M."/>
            <person name="Ohmori Y."/>
            <person name="Kawabata A."/>
            <person name="Hikiji T."/>
            <person name="Kobatake N."/>
            <person name="Inagaki H."/>
            <person name="Ikema Y."/>
            <person name="Okamoto S."/>
            <person name="Okitani R."/>
            <person name="Kawakami T."/>
            <person name="Noguchi S."/>
            <person name="Itoh T."/>
            <person name="Shigeta K."/>
            <person name="Senba T."/>
            <person name="Matsumura K."/>
            <person name="Nakajima Y."/>
            <person name="Mizuno T."/>
            <person name="Morinaga M."/>
            <person name="Sasaki M."/>
            <person name="Togashi T."/>
            <person name="Oyama M."/>
            <person name="Hata H."/>
            <person name="Watanabe M."/>
            <person name="Komatsu T."/>
            <person name="Mizushima-Sugano J."/>
            <person name="Satoh T."/>
            <person name="Shirai Y."/>
            <person name="Takahashi Y."/>
            <person name="Nakagawa K."/>
            <person name="Okumura K."/>
            <person name="Nagase T."/>
            <person name="Nomura N."/>
            <person name="Kikuchi H."/>
            <person name="Masuho Y."/>
            <person name="Yamashita R."/>
            <person name="Nakai K."/>
            <person name="Yada T."/>
            <person name="Nakamura Y."/>
            <person name="Ohara O."/>
            <person name="Isogai T."/>
            <person name="Sugano S."/>
        </authorList>
    </citation>
    <scope>NUCLEOTIDE SEQUENCE [LARGE SCALE MRNA] (ISOFORM 2)</scope>
    <source>
        <tissue>Brain</tissue>
    </source>
</reference>
<reference key="2">
    <citation type="journal article" date="2007" name="BMC Genomics">
        <title>The full-ORF clone resource of the German cDNA consortium.</title>
        <authorList>
            <person name="Bechtel S."/>
            <person name="Rosenfelder H."/>
            <person name="Duda A."/>
            <person name="Schmidt C.P."/>
            <person name="Ernst U."/>
            <person name="Wellenreuther R."/>
            <person name="Mehrle A."/>
            <person name="Schuster C."/>
            <person name="Bahr A."/>
            <person name="Bloecker H."/>
            <person name="Heubner D."/>
            <person name="Hoerlein A."/>
            <person name="Michel G."/>
            <person name="Wedler H."/>
            <person name="Koehrer K."/>
            <person name="Ottenwaelder B."/>
            <person name="Poustka A."/>
            <person name="Wiemann S."/>
            <person name="Schupp I."/>
        </authorList>
    </citation>
    <scope>NUCLEOTIDE SEQUENCE [LARGE SCALE MRNA] (ISOFORM 2)</scope>
    <source>
        <tissue>Brain</tissue>
    </source>
</reference>
<reference key="3">
    <citation type="journal article" date="2003" name="Science">
        <title>Human chromosome 7: DNA sequence and biology.</title>
        <authorList>
            <person name="Scherer S.W."/>
            <person name="Cheung J."/>
            <person name="MacDonald J.R."/>
            <person name="Osborne L.R."/>
            <person name="Nakabayashi K."/>
            <person name="Herbrick J.-A."/>
            <person name="Carson A.R."/>
            <person name="Parker-Katiraee L."/>
            <person name="Skaug J."/>
            <person name="Khaja R."/>
            <person name="Zhang J."/>
            <person name="Hudek A.K."/>
            <person name="Li M."/>
            <person name="Haddad M."/>
            <person name="Duggan G.E."/>
            <person name="Fernandez B.A."/>
            <person name="Kanematsu E."/>
            <person name="Gentles S."/>
            <person name="Christopoulos C.C."/>
            <person name="Choufani S."/>
            <person name="Kwasnicka D."/>
            <person name="Zheng X.H."/>
            <person name="Lai Z."/>
            <person name="Nusskern D.R."/>
            <person name="Zhang Q."/>
            <person name="Gu Z."/>
            <person name="Lu F."/>
            <person name="Zeesman S."/>
            <person name="Nowaczyk M.J."/>
            <person name="Teshima I."/>
            <person name="Chitayat D."/>
            <person name="Shuman C."/>
            <person name="Weksberg R."/>
            <person name="Zackai E.H."/>
            <person name="Grebe T.A."/>
            <person name="Cox S.R."/>
            <person name="Kirkpatrick S.J."/>
            <person name="Rahman N."/>
            <person name="Friedman J.M."/>
            <person name="Heng H.H.Q."/>
            <person name="Pelicci P.G."/>
            <person name="Lo-Coco F."/>
            <person name="Belloni E."/>
            <person name="Shaffer L.G."/>
            <person name="Pober B."/>
            <person name="Morton C.C."/>
            <person name="Gusella J.F."/>
            <person name="Bruns G.A.P."/>
            <person name="Korf B.R."/>
            <person name="Quade B.J."/>
            <person name="Ligon A.H."/>
            <person name="Ferguson H."/>
            <person name="Higgins A.W."/>
            <person name="Leach N.T."/>
            <person name="Herrick S.R."/>
            <person name="Lemyre E."/>
            <person name="Farra C.G."/>
            <person name="Kim H.-G."/>
            <person name="Summers A.M."/>
            <person name="Gripp K.W."/>
            <person name="Roberts W."/>
            <person name="Szatmari P."/>
            <person name="Winsor E.J.T."/>
            <person name="Grzeschik K.-H."/>
            <person name="Teebi A."/>
            <person name="Minassian B.A."/>
            <person name="Kere J."/>
            <person name="Armengol L."/>
            <person name="Pujana M.A."/>
            <person name="Estivill X."/>
            <person name="Wilson M.D."/>
            <person name="Koop B.F."/>
            <person name="Tosi S."/>
            <person name="Moore G.E."/>
            <person name="Boright A.P."/>
            <person name="Zlotorynski E."/>
            <person name="Kerem B."/>
            <person name="Kroisel P.M."/>
            <person name="Petek E."/>
            <person name="Oscier D.G."/>
            <person name="Mould S.J."/>
            <person name="Doehner H."/>
            <person name="Doehner K."/>
            <person name="Rommens J.M."/>
            <person name="Vincent J.B."/>
            <person name="Venter J.C."/>
            <person name="Li P.W."/>
            <person name="Mural R.J."/>
            <person name="Adams M.D."/>
            <person name="Tsui L.-C."/>
        </authorList>
    </citation>
    <scope>NUCLEOTIDE SEQUENCE [LARGE SCALE GENOMIC DNA]</scope>
</reference>
<reference key="4">
    <citation type="submission" date="2005-09" db="EMBL/GenBank/DDBJ databases">
        <authorList>
            <person name="Mural R.J."/>
            <person name="Istrail S."/>
            <person name="Sutton G.G."/>
            <person name="Florea L."/>
            <person name="Halpern A.L."/>
            <person name="Mobarry C.M."/>
            <person name="Lippert R."/>
            <person name="Walenz B."/>
            <person name="Shatkay H."/>
            <person name="Dew I."/>
            <person name="Miller J.R."/>
            <person name="Flanigan M.J."/>
            <person name="Edwards N.J."/>
            <person name="Bolanos R."/>
            <person name="Fasulo D."/>
            <person name="Halldorsson B.V."/>
            <person name="Hannenhalli S."/>
            <person name="Turner R."/>
            <person name="Yooseph S."/>
            <person name="Lu F."/>
            <person name="Nusskern D.R."/>
            <person name="Shue B.C."/>
            <person name="Zheng X.H."/>
            <person name="Zhong F."/>
            <person name="Delcher A.L."/>
            <person name="Huson D.H."/>
            <person name="Kravitz S.A."/>
            <person name="Mouchard L."/>
            <person name="Reinert K."/>
            <person name="Remington K.A."/>
            <person name="Clark A.G."/>
            <person name="Waterman M.S."/>
            <person name="Eichler E.E."/>
            <person name="Adams M.D."/>
            <person name="Hunkapiller M.W."/>
            <person name="Myers E.W."/>
            <person name="Venter J.C."/>
        </authorList>
    </citation>
    <scope>NUCLEOTIDE SEQUENCE [LARGE SCALE GENOMIC DNA]</scope>
</reference>
<reference key="5">
    <citation type="journal article" date="2004" name="Genome Res.">
        <title>The status, quality, and expansion of the NIH full-length cDNA project: the Mammalian Gene Collection (MGC).</title>
        <authorList>
            <consortium name="The MGC Project Team"/>
        </authorList>
    </citation>
    <scope>NUCLEOTIDE SEQUENCE [LARGE SCALE MRNA] (ISOFORMS 1 AND 2)</scope>
    <source>
        <tissue>Brain</tissue>
        <tissue>Lung</tissue>
        <tissue>PNS</tissue>
        <tissue>Testis</tissue>
    </source>
</reference>
<reference key="6">
    <citation type="journal article" date="2008" name="Proc. Natl. Acad. Sci. U.S.A.">
        <title>A quantitative atlas of mitotic phosphorylation.</title>
        <authorList>
            <person name="Dephoure N."/>
            <person name="Zhou C."/>
            <person name="Villen J."/>
            <person name="Beausoleil S.A."/>
            <person name="Bakalarski C.E."/>
            <person name="Elledge S.J."/>
            <person name="Gygi S.P."/>
        </authorList>
    </citation>
    <scope>PHOSPHORYLATION [LARGE SCALE ANALYSIS] AT SER-191; SER-192 AND SER-194</scope>
    <scope>IDENTIFICATION BY MASS SPECTROMETRY [LARGE SCALE ANALYSIS]</scope>
    <source>
        <tissue>Cervix carcinoma</tissue>
    </source>
</reference>
<reference key="7">
    <citation type="journal article" date="2009" name="Sci. Signal.">
        <title>Quantitative phosphoproteomic analysis of T cell receptor signaling reveals system-wide modulation of protein-protein interactions.</title>
        <authorList>
            <person name="Mayya V."/>
            <person name="Lundgren D.H."/>
            <person name="Hwang S.-I."/>
            <person name="Rezaul K."/>
            <person name="Wu L."/>
            <person name="Eng J.K."/>
            <person name="Rodionov V."/>
            <person name="Han D.K."/>
        </authorList>
    </citation>
    <scope>PHOSPHORYLATION [LARGE SCALE ANALYSIS] AT SER-196</scope>
    <scope>IDENTIFICATION BY MASS SPECTROMETRY [LARGE SCALE ANALYSIS]</scope>
    <source>
        <tissue>Leukemic T-cell</tissue>
    </source>
</reference>
<reference key="8">
    <citation type="journal article" date="2010" name="Sci. Signal.">
        <title>Quantitative phosphoproteomics reveals widespread full phosphorylation site occupancy during mitosis.</title>
        <authorList>
            <person name="Olsen J.V."/>
            <person name="Vermeulen M."/>
            <person name="Santamaria A."/>
            <person name="Kumar C."/>
            <person name="Miller M.L."/>
            <person name="Jensen L.J."/>
            <person name="Gnad F."/>
            <person name="Cox J."/>
            <person name="Jensen T.S."/>
            <person name="Nigg E.A."/>
            <person name="Brunak S."/>
            <person name="Mann M."/>
        </authorList>
    </citation>
    <scope>IDENTIFICATION BY MASS SPECTROMETRY [LARGE SCALE ANALYSIS]</scope>
    <source>
        <tissue>Cervix carcinoma</tissue>
    </source>
</reference>
<reference key="9">
    <citation type="journal article" date="2011" name="Sci. Signal.">
        <title>System-wide temporal characterization of the proteome and phosphoproteome of human embryonic stem cell differentiation.</title>
        <authorList>
            <person name="Rigbolt K.T."/>
            <person name="Prokhorova T.A."/>
            <person name="Akimov V."/>
            <person name="Henningsen J."/>
            <person name="Johansen P.T."/>
            <person name="Kratchmarova I."/>
            <person name="Kassem M."/>
            <person name="Mann M."/>
            <person name="Olsen J.V."/>
            <person name="Blagoev B."/>
        </authorList>
    </citation>
    <scope>PHOSPHORYLATION [LARGE SCALE ANALYSIS] AT SER-82</scope>
    <scope>IDENTIFICATION BY MASS SPECTROMETRY [LARGE SCALE ANALYSIS]</scope>
</reference>
<reference key="10">
    <citation type="journal article" date="2013" name="J. Proteome Res.">
        <title>Toward a comprehensive characterization of a human cancer cell phosphoproteome.</title>
        <authorList>
            <person name="Zhou H."/>
            <person name="Di Palma S."/>
            <person name="Preisinger C."/>
            <person name="Peng M."/>
            <person name="Polat A.N."/>
            <person name="Heck A.J."/>
            <person name="Mohammed S."/>
        </authorList>
    </citation>
    <scope>PHOSPHORYLATION [LARGE SCALE ANALYSIS] AT SER-82</scope>
    <scope>IDENTIFICATION BY MASS SPECTROMETRY [LARGE SCALE ANALYSIS]</scope>
    <source>
        <tissue>Cervix carcinoma</tissue>
    </source>
</reference>
<sequence length="247" mass="28385">MGKRDNRVAYMNPIAMARSRGPIQSSGPTIQDYLNRPRPTWEEVKEQLEKKKKGSKALAEFEEKMNENWKKELEKHREKLLSGSESSSKKRQRKKKEKKKSGRYSSSSSSSSDSSSSSSDSEDEDKKQGKRRKKKKNRSHKSSESSMSETESDSKDSLKKKKKSKDGTEKEKDIKGLSKKRKMYSEDKPLSSESLSESEYIEEVRAKKKKSSEEREKATEKTKKKKKHKKHSKKKKKKAASSSPDSP</sequence>
<proteinExistence type="evidence at protein level"/>
<comment type="alternative products">
    <event type="alternative splicing"/>
    <isoform>
        <id>Q5BKY9-1</id>
        <name>1</name>
        <sequence type="displayed"/>
    </isoform>
    <isoform>
        <id>Q5BKY9-2</id>
        <name>2</name>
        <sequence type="described" ref="VSP_025571"/>
    </isoform>
</comment>
<comment type="similarity">
    <text evidence="5">Belongs to the FAM133 family.</text>
</comment>